<proteinExistence type="evidence at protein level"/>
<feature type="initiator methionine" description="Removed" evidence="3 4">
    <location>
        <position position="1"/>
    </location>
</feature>
<feature type="chain" id="PRO_0000067325" description="Fatty acid-binding protein, heart">
    <location>
        <begin position="2"/>
        <end position="133"/>
    </location>
</feature>
<feature type="binding site" evidence="2">
    <location>
        <begin position="127"/>
        <end position="129"/>
    </location>
    <ligand>
        <name>(9Z)-octadecenoate</name>
        <dbReference type="ChEBI" id="CHEBI:30823"/>
    </ligand>
</feature>
<feature type="binding site" evidence="2">
    <location>
        <begin position="127"/>
        <end position="129"/>
    </location>
    <ligand>
        <name>hexadecanoate</name>
        <dbReference type="ChEBI" id="CHEBI:7896"/>
    </ligand>
</feature>
<feature type="binding site" evidence="2">
    <location>
        <begin position="127"/>
        <end position="129"/>
    </location>
    <ligand>
        <name>octadecanoate</name>
        <dbReference type="ChEBI" id="CHEBI:25629"/>
    </ligand>
</feature>
<feature type="modified residue" description="N-acetylalanine" evidence="3">
    <location>
        <position position="2"/>
    </location>
</feature>
<feature type="modified residue" description="Phosphothreonine" evidence="7">
    <location>
        <position position="8"/>
    </location>
</feature>
<feature type="modified residue" description="Phosphotyrosine; by Tyr-kinases" evidence="5">
    <location>
        <position position="20"/>
    </location>
</feature>
<feature type="modified residue" description="Phosphoserine" evidence="7">
    <location>
        <position position="23"/>
    </location>
</feature>
<feature type="modified residue" description="Phosphothreonine" evidence="7">
    <location>
        <position position="30"/>
    </location>
</feature>
<feature type="modified residue" description="Phosphoserine" evidence="7">
    <location>
        <position position="83"/>
    </location>
</feature>
<feature type="sequence conflict" description="In Ref. 4; AA sequence." evidence="6" ref="4">
    <original>S</original>
    <variation>SN</variation>
    <location>
        <position position="64"/>
    </location>
</feature>
<feature type="sequence conflict" description="In Ref. 7; AA sequence." evidence="6" ref="7">
    <original>E</original>
    <variation>Q</variation>
    <location>
        <position position="70"/>
    </location>
</feature>
<feature type="sequence conflict" description="In Ref. 4; AA sequence." evidence="6" ref="4">
    <original>F</original>
    <variation>D</variation>
    <location>
        <position position="71"/>
    </location>
</feature>
<feature type="sequence conflict" description="In Ref. 3; AAF19003." evidence="6" ref="3">
    <original>L</original>
    <variation>LL</variation>
    <location>
        <position position="116"/>
    </location>
</feature>
<comment type="function">
    <text>FABPs are thought to play a role in the intracellular transport of long-chain fatty acids and their acyl-CoA esters.</text>
</comment>
<comment type="subcellular location">
    <subcellularLocation>
        <location>Cytoplasm</location>
    </subcellularLocation>
</comment>
<comment type="tissue specificity">
    <text>Heart, but also skeletal muscle, kidney, brain and mammary gland.</text>
</comment>
<comment type="domain">
    <text evidence="1">Forms a beta-barrel structure that accommodates the hydrophobic ligand in its interior.</text>
</comment>
<comment type="mass spectrometry"/>
<comment type="similarity">
    <text evidence="6">Belongs to the calycin superfamily. Fatty-acid binding protein (FABP) family.</text>
</comment>
<sequence>MADAFVGTWKLVDSKNFDDYMKSLGVGFATRQVASMTKPTTIIEKNGDTITIKTHSTFKNTEISFQLGVEFDEVTADDRKVKSVVTLDGGKLVHVQKWDGQETTLTRELSDGKLILTLTHGNVVSTRTYEKEA</sequence>
<accession>P07483</accession>
<accession>Q9QY04</accession>
<protein>
    <recommendedName>
        <fullName>Fatty acid-binding protein, heart</fullName>
    </recommendedName>
    <alternativeName>
        <fullName>Fatty acid-binding protein 3</fullName>
    </alternativeName>
    <alternativeName>
        <fullName>Heart-type fatty acid-binding protein</fullName>
        <shortName>H-FABP</shortName>
    </alternativeName>
</protein>
<organism>
    <name type="scientific">Rattus norvegicus</name>
    <name type="common">Rat</name>
    <dbReference type="NCBI Taxonomy" id="10116"/>
    <lineage>
        <taxon>Eukaryota</taxon>
        <taxon>Metazoa</taxon>
        <taxon>Chordata</taxon>
        <taxon>Craniata</taxon>
        <taxon>Vertebrata</taxon>
        <taxon>Euteleostomi</taxon>
        <taxon>Mammalia</taxon>
        <taxon>Eutheria</taxon>
        <taxon>Euarchontoglires</taxon>
        <taxon>Glires</taxon>
        <taxon>Rodentia</taxon>
        <taxon>Myomorpha</taxon>
        <taxon>Muroidea</taxon>
        <taxon>Muridae</taxon>
        <taxon>Murinae</taxon>
        <taxon>Rattus</taxon>
    </lineage>
</organism>
<keyword id="KW-0007">Acetylation</keyword>
<keyword id="KW-0963">Cytoplasm</keyword>
<keyword id="KW-0903">Direct protein sequencing</keyword>
<keyword id="KW-0446">Lipid-binding</keyword>
<keyword id="KW-0597">Phosphoprotein</keyword>
<keyword id="KW-1185">Reference proteome</keyword>
<keyword id="KW-0813">Transport</keyword>
<dbReference type="EMBL" id="M18034">
    <property type="protein sequence ID" value="AAA41137.1"/>
    <property type="molecule type" value="mRNA"/>
</dbReference>
<dbReference type="EMBL" id="J02773">
    <property type="protein sequence ID" value="AAA41136.1"/>
    <property type="molecule type" value="mRNA"/>
</dbReference>
<dbReference type="EMBL" id="AF144090">
    <property type="protein sequence ID" value="AAF19003.1"/>
    <property type="molecule type" value="Genomic_DNA"/>
</dbReference>
<dbReference type="PIR" id="A28458">
    <property type="entry name" value="A27452"/>
</dbReference>
<dbReference type="RefSeq" id="NP_077076.1">
    <property type="nucleotide sequence ID" value="NM_024162.2"/>
</dbReference>
<dbReference type="SMR" id="P07483"/>
<dbReference type="BioGRID" id="249415">
    <property type="interactions" value="1"/>
</dbReference>
<dbReference type="FunCoup" id="P07483">
    <property type="interactions" value="500"/>
</dbReference>
<dbReference type="STRING" id="10116.ENSRNOP00000017325"/>
<dbReference type="iPTMnet" id="P07483"/>
<dbReference type="PhosphoSitePlus" id="P07483"/>
<dbReference type="PaxDb" id="10116-ENSRNOP00000017325"/>
<dbReference type="Ensembl" id="ENSRNOT00000017325.6">
    <property type="protein sequence ID" value="ENSRNOP00000017325.2"/>
    <property type="gene ID" value="ENSRNOG00000012879.6"/>
</dbReference>
<dbReference type="GeneID" id="79131"/>
<dbReference type="KEGG" id="rno:79131"/>
<dbReference type="UCSC" id="RGD:69048">
    <property type="organism name" value="rat"/>
</dbReference>
<dbReference type="AGR" id="RGD:69048"/>
<dbReference type="CTD" id="2170"/>
<dbReference type="RGD" id="69048">
    <property type="gene designation" value="Fabp3"/>
</dbReference>
<dbReference type="eggNOG" id="KOG4015">
    <property type="taxonomic scope" value="Eukaryota"/>
</dbReference>
<dbReference type="GeneTree" id="ENSGT00940000155104"/>
<dbReference type="HOGENOM" id="CLU_113772_0_0_1"/>
<dbReference type="InParanoid" id="P07483"/>
<dbReference type="OMA" id="NTEINCK"/>
<dbReference type="OrthoDB" id="12168at9989"/>
<dbReference type="PhylomeDB" id="P07483"/>
<dbReference type="TreeFam" id="TF316894"/>
<dbReference type="Reactome" id="R-RNO-163560">
    <property type="pathway name" value="Triglyceride catabolism"/>
</dbReference>
<dbReference type="PRO" id="PR:P07483"/>
<dbReference type="Proteomes" id="UP000002494">
    <property type="component" value="Chromosome 5"/>
</dbReference>
<dbReference type="Bgee" id="ENSRNOG00000012879">
    <property type="expression patterns" value="Expressed in heart and 20 other cell types or tissues"/>
</dbReference>
<dbReference type="GO" id="GO:0005829">
    <property type="term" value="C:cytosol"/>
    <property type="evidence" value="ECO:0000318"/>
    <property type="project" value="GO_Central"/>
</dbReference>
<dbReference type="GO" id="GO:0005615">
    <property type="term" value="C:extracellular space"/>
    <property type="evidence" value="ECO:0000266"/>
    <property type="project" value="RGD"/>
</dbReference>
<dbReference type="GO" id="GO:0005634">
    <property type="term" value="C:nucleus"/>
    <property type="evidence" value="ECO:0000318"/>
    <property type="project" value="GO_Central"/>
</dbReference>
<dbReference type="GO" id="GO:0016528">
    <property type="term" value="C:sarcoplasm"/>
    <property type="evidence" value="ECO:0000314"/>
    <property type="project" value="RGD"/>
</dbReference>
<dbReference type="GO" id="GO:0008092">
    <property type="term" value="F:cytoskeletal protein binding"/>
    <property type="evidence" value="ECO:0000266"/>
    <property type="project" value="RGD"/>
</dbReference>
<dbReference type="GO" id="GO:0005504">
    <property type="term" value="F:fatty acid binding"/>
    <property type="evidence" value="ECO:0000353"/>
    <property type="project" value="RGD"/>
</dbReference>
<dbReference type="GO" id="GO:0050543">
    <property type="term" value="F:icosatetraenoic acid binding"/>
    <property type="evidence" value="ECO:0000353"/>
    <property type="project" value="RGD"/>
</dbReference>
<dbReference type="GO" id="GO:0036041">
    <property type="term" value="F:long-chain fatty acid binding"/>
    <property type="evidence" value="ECO:0000266"/>
    <property type="project" value="RGD"/>
</dbReference>
<dbReference type="GO" id="GO:0005324">
    <property type="term" value="F:long-chain fatty acid transmembrane transporter activity"/>
    <property type="evidence" value="ECO:0000353"/>
    <property type="project" value="RGD"/>
</dbReference>
<dbReference type="GO" id="GO:0070538">
    <property type="term" value="F:oleic acid binding"/>
    <property type="evidence" value="ECO:0000266"/>
    <property type="project" value="RGD"/>
</dbReference>
<dbReference type="GO" id="GO:0050873">
    <property type="term" value="P:brown fat cell differentiation"/>
    <property type="evidence" value="ECO:0000266"/>
    <property type="project" value="RGD"/>
</dbReference>
<dbReference type="GO" id="GO:0042632">
    <property type="term" value="P:cholesterol homeostasis"/>
    <property type="evidence" value="ECO:0000266"/>
    <property type="project" value="RGD"/>
</dbReference>
<dbReference type="GO" id="GO:0006635">
    <property type="term" value="P:fatty acid beta-oxidation"/>
    <property type="evidence" value="ECO:0000303"/>
    <property type="project" value="RGD"/>
</dbReference>
<dbReference type="GO" id="GO:0006631">
    <property type="term" value="P:fatty acid metabolic process"/>
    <property type="evidence" value="ECO:0000270"/>
    <property type="project" value="RGD"/>
</dbReference>
<dbReference type="GO" id="GO:0032365">
    <property type="term" value="P:intracellular lipid transport"/>
    <property type="evidence" value="ECO:0000266"/>
    <property type="project" value="RGD"/>
</dbReference>
<dbReference type="GO" id="GO:0015909">
    <property type="term" value="P:long-chain fatty acid transport"/>
    <property type="evidence" value="ECO:0000314"/>
    <property type="project" value="RGD"/>
</dbReference>
<dbReference type="GO" id="GO:0055091">
    <property type="term" value="P:phospholipid homeostasis"/>
    <property type="evidence" value="ECO:0000266"/>
    <property type="project" value="RGD"/>
</dbReference>
<dbReference type="GO" id="GO:0140214">
    <property type="term" value="P:positive regulation of long-chain fatty acid import into cell"/>
    <property type="evidence" value="ECO:0000266"/>
    <property type="project" value="RGD"/>
</dbReference>
<dbReference type="GO" id="GO:0046320">
    <property type="term" value="P:regulation of fatty acid oxidation"/>
    <property type="evidence" value="ECO:0000266"/>
    <property type="project" value="RGD"/>
</dbReference>
<dbReference type="GO" id="GO:2001245">
    <property type="term" value="P:regulation of phosphatidylcholine biosynthetic process"/>
    <property type="evidence" value="ECO:0000266"/>
    <property type="project" value="RGD"/>
</dbReference>
<dbReference type="GO" id="GO:0070542">
    <property type="term" value="P:response to fatty acid"/>
    <property type="evidence" value="ECO:0000270"/>
    <property type="project" value="RGD"/>
</dbReference>
<dbReference type="GO" id="GO:0032868">
    <property type="term" value="P:response to insulin"/>
    <property type="evidence" value="ECO:0000270"/>
    <property type="project" value="RGD"/>
</dbReference>
<dbReference type="GO" id="GO:0009410">
    <property type="term" value="P:response to xenobiotic stimulus"/>
    <property type="evidence" value="ECO:0000270"/>
    <property type="project" value="RGD"/>
</dbReference>
<dbReference type="CDD" id="cd19466">
    <property type="entry name" value="FABP3"/>
    <property type="match status" value="1"/>
</dbReference>
<dbReference type="FunFam" id="2.40.128.20:FF:000001">
    <property type="entry name" value="Fatty acid-binding protein, adipocyte"/>
    <property type="match status" value="1"/>
</dbReference>
<dbReference type="Gene3D" id="2.40.128.20">
    <property type="match status" value="1"/>
</dbReference>
<dbReference type="InterPro" id="IPR012674">
    <property type="entry name" value="Calycin"/>
</dbReference>
<dbReference type="InterPro" id="IPR000463">
    <property type="entry name" value="Fatty_acid-bd"/>
</dbReference>
<dbReference type="InterPro" id="IPR031259">
    <property type="entry name" value="ILBP"/>
</dbReference>
<dbReference type="InterPro" id="IPR000566">
    <property type="entry name" value="Lipocln_cytosolic_FA-bd_dom"/>
</dbReference>
<dbReference type="PANTHER" id="PTHR11955">
    <property type="entry name" value="FATTY ACID BINDING PROTEIN"/>
    <property type="match status" value="1"/>
</dbReference>
<dbReference type="Pfam" id="PF00061">
    <property type="entry name" value="Lipocalin"/>
    <property type="match status" value="1"/>
</dbReference>
<dbReference type="PRINTS" id="PR00178">
    <property type="entry name" value="FATTYACIDBP"/>
</dbReference>
<dbReference type="SUPFAM" id="SSF50814">
    <property type="entry name" value="Lipocalins"/>
    <property type="match status" value="1"/>
</dbReference>
<dbReference type="PROSITE" id="PS00214">
    <property type="entry name" value="FABP"/>
    <property type="match status" value="1"/>
</dbReference>
<reference key="1">
    <citation type="journal article" date="1987" name="Biochemistry">
        <title>Cloning and tissue distribution of rat heart fatty acid binding protein mRNA: identical forms in heart and skeletal muscle.</title>
        <authorList>
            <person name="Claffey K.P."/>
            <person name="Herrera V.L."/>
            <person name="Brecher P."/>
            <person name="Ruiz-Opazo N."/>
        </authorList>
    </citation>
    <scope>NUCLEOTIDE SEQUENCE [MRNA]</scope>
</reference>
<reference key="2">
    <citation type="journal article" date="1987" name="J. Biol. Chem.">
        <title>Analysis of the tissue-specific expression, developmental regulation, and linkage relationships of a rodent gene encoding heart fatty acid binding protein.</title>
        <authorList>
            <person name="Heuckeroth R.O."/>
            <person name="Birkenmeier E.H."/>
            <person name="Levin M.S."/>
            <person name="Gordon J.I."/>
        </authorList>
    </citation>
    <scope>NUCLEOTIDE SEQUENCE [MRNA]</scope>
</reference>
<reference key="3">
    <citation type="journal article" date="1999" name="Eur. J. Biochem.">
        <title>Structure and chromosomal location of the rat gene encoding the heart fatty acid-binding protein.</title>
        <authorList>
            <person name="Zhang J."/>
            <person name="Rickers-Haunerland J."/>
            <person name="Dawe I."/>
            <person name="Haunerland N.H."/>
        </authorList>
    </citation>
    <scope>NUCLEOTIDE SEQUENCE [GENOMIC DNA]</scope>
    <source>
        <strain>Wistar</strain>
        <tissue>Heart</tissue>
    </source>
</reference>
<reference key="4">
    <citation type="journal article" date="1988" name="J. Biol. Chem.">
        <title>Revision of the blocked N-terminus of rat heart fatty acid-binding protein by liquid secondary ion mass spectrometry.</title>
        <authorList>
            <person name="Gibson B.W."/>
            <person name="Yu Z."/>
            <person name="Aberth W."/>
            <person name="Burlingame A.L."/>
            <person name="Bass N.M."/>
        </authorList>
    </citation>
    <scope>PROTEIN SEQUENCE OF 2-133</scope>
</reference>
<reference key="5">
    <citation type="journal article" date="1991" name="J. Biol. Chem.">
        <title>Primary structure and cellular distribution of two fatty acid-binding proteins in adult rat kidneys.</title>
        <authorList>
            <person name="Kimura H."/>
            <person name="Odani S."/>
            <person name="Nishi S."/>
            <person name="Sato H."/>
            <person name="Arakawa M."/>
            <person name="Ono T."/>
        </authorList>
    </citation>
    <scope>PROTEIN SEQUENCE OF 2-133</scope>
    <scope>CLEAVAGE OF INITIATOR METHIONINE</scope>
    <scope>ACETYLATION AT ALA-2</scope>
    <source>
        <tissue>Kidney</tissue>
    </source>
</reference>
<reference key="6">
    <citation type="journal article" date="1986" name="J. Biol. Chem.">
        <title>Rat heart fatty acid-binding protein is highly homologous to the murine adipocyte 422 protein and the P2 protein of peripheral nerve myelin.</title>
        <authorList>
            <person name="Sacchettini J.C."/>
            <person name="Said B."/>
            <person name="Schulz H."/>
            <person name="Gordon J.I."/>
        </authorList>
    </citation>
    <scope>PRELIMINARY PROTEIN SEQUENCE OF 2-133</scope>
</reference>
<reference key="7">
    <citation type="journal article" date="1989" name="Biochem. J.">
        <title>Rat heart fatty acid-binding protein. Evidence that supports the amino acid sequence predicted from the cDNA.</title>
        <authorList>
            <person name="Kimura H."/>
            <person name="Hitomi M."/>
            <person name="Odani S."/>
            <person name="Koide T."/>
            <person name="Arakawa M."/>
            <person name="Ono T."/>
        </authorList>
    </citation>
    <scope>PROTEIN SEQUENCE OF 59-87</scope>
</reference>
<reference key="8">
    <citation type="submission" date="2006-11" db="UniProtKB">
        <authorList>
            <person name="Lubec G."/>
            <person name="Diao W."/>
        </authorList>
    </citation>
    <scope>PROTEIN SEQUENCE OF 60-80 AND 114-127</scope>
    <scope>IDENTIFICATION BY MASS SPECTROMETRY</scope>
    <source>
        <strain>Sprague-Dawley</strain>
        <tissue>Hippocampus</tissue>
    </source>
</reference>
<reference key="9">
    <citation type="journal article" date="1989" name="Eur. J. Biochem.">
        <title>Purification and characterization of a fatty-acid-binding protein from the gastric mucosa of rats. Possible identity with heart fatty-acid-binding protein and its parietal cell localization.</title>
        <authorList>
            <person name="Kanda T."/>
            <person name="Iseki S."/>
            <person name="Hitomi M."/>
            <person name="Kimura H."/>
            <person name="Odani S."/>
            <person name="Kondo H."/>
            <person name="Matsubara Y."/>
            <person name="Muto T."/>
            <person name="Ono T."/>
        </authorList>
    </citation>
    <scope>PARTIAL PROTEIN SEQUENCE</scope>
    <source>
        <tissue>Stomach</tissue>
    </source>
</reference>
<reference key="10">
    <citation type="journal article" date="1988" name="Biochem. J.">
        <title>Isolation and characterization of fatty acid binding proteins from mammary tissue of lactating rats.</title>
        <authorList>
            <person name="Jones P.D."/>
            <person name="Carne A."/>
            <person name="Bass N.M."/>
            <person name="Grigor M.R."/>
        </authorList>
    </citation>
    <scope>PARTIAL PROTEIN SEQUENCE</scope>
    <source>
        <tissue>Mammary gland</tissue>
    </source>
</reference>
<reference key="11">
    <citation type="journal article" date="1994" name="Biochim. Biophys. Acta">
        <title>Differentiational regulation and phosphorylation of the fatty acid-binding protein from rat mammary epithelial cells.</title>
        <authorList>
            <person name="Nielsen S.U."/>
            <person name="Rump R."/>
            <person name="Hoejrup P."/>
            <person name="Roepstorff P."/>
            <person name="Spener F."/>
        </authorList>
    </citation>
    <scope>PARTIAL PROTEIN SEQUENCE</scope>
    <scope>MASS SPECTROMETRY</scope>
    <scope>PHOSPHORYLATION AT TYR-20</scope>
    <source>
        <tissue>Mammary gland</tissue>
    </source>
</reference>
<reference key="12">
    <citation type="journal article" date="2012" name="Nat. Commun.">
        <title>Quantitative maps of protein phosphorylation sites across 14 different rat organs and tissues.</title>
        <authorList>
            <person name="Lundby A."/>
            <person name="Secher A."/>
            <person name="Lage K."/>
            <person name="Nordsborg N.B."/>
            <person name="Dmytriyev A."/>
            <person name="Lundby C."/>
            <person name="Olsen J.V."/>
        </authorList>
    </citation>
    <scope>PHOSPHORYLATION [LARGE SCALE ANALYSIS] AT THR-8; SER-23; THR-30 AND SER-83</scope>
    <scope>IDENTIFICATION BY MASS SPECTROMETRY [LARGE SCALE ANALYSIS]</scope>
</reference>
<evidence type="ECO:0000250" key="1"/>
<evidence type="ECO:0000250" key="2">
    <source>
        <dbReference type="UniProtKB" id="P05413"/>
    </source>
</evidence>
<evidence type="ECO:0000269" key="3">
    <source>
    </source>
</evidence>
<evidence type="ECO:0000269" key="4">
    <source>
    </source>
</evidence>
<evidence type="ECO:0000269" key="5">
    <source>
    </source>
</evidence>
<evidence type="ECO:0000305" key="6"/>
<evidence type="ECO:0007744" key="7">
    <source>
    </source>
</evidence>
<name>FABPH_RAT</name>
<gene>
    <name type="primary">Fabp3</name>
</gene>